<dbReference type="EMBL" id="BC001460">
    <property type="protein sequence ID" value="AAH01460.2"/>
    <property type="molecule type" value="mRNA"/>
</dbReference>
<dbReference type="EMBL" id="BC033856">
    <property type="protein sequence ID" value="AAH33856.1"/>
    <property type="status" value="ALT_INIT"/>
    <property type="molecule type" value="mRNA"/>
</dbReference>
<dbReference type="EMBL" id="AK091465">
    <property type="protein sequence ID" value="BAC03668.1"/>
    <property type="molecule type" value="mRNA"/>
</dbReference>
<dbReference type="EMBL" id="AB018274">
    <property type="protein sequence ID" value="BAA34451.1"/>
    <property type="status" value="ALT_SEQ"/>
    <property type="molecule type" value="mRNA"/>
</dbReference>
<dbReference type="EMBL" id="AL133034">
    <property type="protein sequence ID" value="CAB61364.1"/>
    <property type="molecule type" value="mRNA"/>
</dbReference>
<dbReference type="CCDS" id="CCDS4328.1">
    <molecule id="Q6PKG0-3"/>
</dbReference>
<dbReference type="PIR" id="T42646">
    <property type="entry name" value="T42646"/>
</dbReference>
<dbReference type="RefSeq" id="NP_056130.2">
    <molecule id="Q6PKG0-3"/>
    <property type="nucleotide sequence ID" value="NM_015315.4"/>
</dbReference>
<dbReference type="RefSeq" id="XP_005268461.1">
    <property type="nucleotide sequence ID" value="XM_005268404.3"/>
</dbReference>
<dbReference type="PDB" id="4ZC4">
    <property type="method" value="X-ray"/>
    <property type="resolution" value="1.86 A"/>
    <property type="chains" value="A/B/C/D=873-1023"/>
</dbReference>
<dbReference type="PDB" id="5C0V">
    <property type="method" value="X-ray"/>
    <property type="resolution" value="2.20 A"/>
    <property type="chains" value="A/B/C/D=873-1023"/>
</dbReference>
<dbReference type="PDB" id="5V4R">
    <property type="method" value="X-ray"/>
    <property type="resolution" value="1.77 A"/>
    <property type="chains" value="A/B=873-1023"/>
</dbReference>
<dbReference type="PDB" id="5V7C">
    <property type="method" value="X-ray"/>
    <property type="resolution" value="2.59 A"/>
    <property type="chains" value="B=873-1023"/>
</dbReference>
<dbReference type="PDB" id="5V87">
    <property type="method" value="X-ray"/>
    <property type="resolution" value="1.69 A"/>
    <property type="chains" value="A/B=873-1023"/>
</dbReference>
<dbReference type="PDB" id="6PW3">
    <property type="method" value="X-ray"/>
    <property type="resolution" value="2.34 A"/>
    <property type="chains" value="A/B/C/D=873-1023"/>
</dbReference>
<dbReference type="PDB" id="7SOO">
    <property type="method" value="X-ray"/>
    <property type="resolution" value="1.65 A"/>
    <property type="chains" value="A=400-487"/>
</dbReference>
<dbReference type="PDB" id="7SOP">
    <property type="method" value="X-ray"/>
    <property type="resolution" value="1.55 A"/>
    <property type="chains" value="A=400-487"/>
</dbReference>
<dbReference type="PDB" id="7SOQ">
    <property type="method" value="X-ray"/>
    <property type="resolution" value="1.15 A"/>
    <property type="chains" value="A=400-487"/>
</dbReference>
<dbReference type="PDB" id="7SOR">
    <property type="method" value="X-ray"/>
    <property type="resolution" value="1.35 A"/>
    <property type="chains" value="A/C=400-487"/>
</dbReference>
<dbReference type="PDB" id="7SOS">
    <property type="method" value="X-ray"/>
    <property type="resolution" value="1.25 A"/>
    <property type="chains" value="A=400-487"/>
</dbReference>
<dbReference type="PDB" id="7SOT">
    <property type="method" value="X-ray"/>
    <property type="resolution" value="1.52 A"/>
    <property type="chains" value="A=400-487"/>
</dbReference>
<dbReference type="PDB" id="7SOU">
    <property type="method" value="X-ray"/>
    <property type="resolution" value="1.45 A"/>
    <property type="chains" value="A=400-487"/>
</dbReference>
<dbReference type="PDB" id="7SOV">
    <property type="method" value="X-ray"/>
    <property type="resolution" value="1.45 A"/>
    <property type="chains" value="A=400-487"/>
</dbReference>
<dbReference type="PDB" id="7SOW">
    <property type="method" value="X-ray"/>
    <property type="resolution" value="1.30 A"/>
    <property type="chains" value="A=400-487"/>
</dbReference>
<dbReference type="PDB" id="8EY6">
    <property type="method" value="X-ray"/>
    <property type="resolution" value="1.63 A"/>
    <property type="chains" value="A=400-487"/>
</dbReference>
<dbReference type="PDB" id="8EY7">
    <property type="method" value="X-ray"/>
    <property type="resolution" value="1.35 A"/>
    <property type="chains" value="A=400-487"/>
</dbReference>
<dbReference type="PDB" id="8EY8">
    <property type="method" value="X-ray"/>
    <property type="resolution" value="1.30 A"/>
    <property type="chains" value="A=400-487"/>
</dbReference>
<dbReference type="PDB" id="8G90">
    <property type="method" value="X-ray"/>
    <property type="resolution" value="1.20 A"/>
    <property type="chains" value="A=400-487"/>
</dbReference>
<dbReference type="PDB" id="8G91">
    <property type="method" value="X-ray"/>
    <property type="resolution" value="1.20 A"/>
    <property type="chains" value="A=400-487"/>
</dbReference>
<dbReference type="PDB" id="8XP2">
    <property type="method" value="EM"/>
    <property type="resolution" value="3.20 A"/>
    <property type="chains" value="JD=1-1096"/>
</dbReference>
<dbReference type="PDB" id="8XP3">
    <property type="method" value="EM"/>
    <property type="resolution" value="3.40 A"/>
    <property type="chains" value="JD=1-1096"/>
</dbReference>
<dbReference type="PDBsum" id="4ZC4"/>
<dbReference type="PDBsum" id="5C0V"/>
<dbReference type="PDBsum" id="5V4R"/>
<dbReference type="PDBsum" id="5V7C"/>
<dbReference type="PDBsum" id="5V87"/>
<dbReference type="PDBsum" id="6PW3"/>
<dbReference type="PDBsum" id="7SOO"/>
<dbReference type="PDBsum" id="7SOP"/>
<dbReference type="PDBsum" id="7SOQ"/>
<dbReference type="PDBsum" id="7SOR"/>
<dbReference type="PDBsum" id="7SOS"/>
<dbReference type="PDBsum" id="7SOT"/>
<dbReference type="PDBsum" id="7SOU"/>
<dbReference type="PDBsum" id="7SOV"/>
<dbReference type="PDBsum" id="7SOW"/>
<dbReference type="PDBsum" id="8EY6"/>
<dbReference type="PDBsum" id="8EY7"/>
<dbReference type="PDBsum" id="8EY8"/>
<dbReference type="PDBsum" id="8G90"/>
<dbReference type="PDBsum" id="8G91"/>
<dbReference type="PDBsum" id="8XP2"/>
<dbReference type="PDBsum" id="8XP3"/>
<dbReference type="EMDB" id="EMD-38548"/>
<dbReference type="EMDB" id="EMD-38549"/>
<dbReference type="SMR" id="Q6PKG0"/>
<dbReference type="BioGRID" id="116947">
    <property type="interactions" value="505"/>
</dbReference>
<dbReference type="CORUM" id="Q6PKG0"/>
<dbReference type="FunCoup" id="Q6PKG0">
    <property type="interactions" value="2605"/>
</dbReference>
<dbReference type="IntAct" id="Q6PKG0">
    <property type="interactions" value="273"/>
</dbReference>
<dbReference type="MINT" id="Q6PKG0"/>
<dbReference type="STRING" id="9606.ENSP00000336721"/>
<dbReference type="CarbonylDB" id="Q6PKG0"/>
<dbReference type="GlyCosmos" id="Q6PKG0">
    <property type="glycosylation" value="3 sites, 1 glycan"/>
</dbReference>
<dbReference type="GlyGen" id="Q6PKG0">
    <property type="glycosylation" value="10 sites, 1 O-linked glycan (7 sites)"/>
</dbReference>
<dbReference type="iPTMnet" id="Q6PKG0"/>
<dbReference type="PhosphoSitePlus" id="Q6PKG0"/>
<dbReference type="SwissPalm" id="Q6PKG0"/>
<dbReference type="BioMuta" id="LARP1"/>
<dbReference type="DMDM" id="73621135"/>
<dbReference type="jPOST" id="Q6PKG0"/>
<dbReference type="MassIVE" id="Q6PKG0"/>
<dbReference type="PaxDb" id="9606-ENSP00000336721"/>
<dbReference type="PeptideAtlas" id="Q6PKG0"/>
<dbReference type="ProteomicsDB" id="67242">
    <molecule id="Q6PKG0-1"/>
</dbReference>
<dbReference type="ProteomicsDB" id="67243">
    <molecule id="Q6PKG0-3"/>
</dbReference>
<dbReference type="Pumba" id="Q6PKG0"/>
<dbReference type="Antibodypedia" id="28316">
    <property type="antibodies" value="145 antibodies from 27 providers"/>
</dbReference>
<dbReference type="DNASU" id="23367"/>
<dbReference type="Ensembl" id="ENST00000336314.9">
    <molecule id="Q6PKG0-3"/>
    <property type="protein sequence ID" value="ENSP00000336721.4"/>
    <property type="gene ID" value="ENSG00000155506.19"/>
</dbReference>
<dbReference type="Ensembl" id="ENST00000518297.6">
    <molecule id="Q6PKG0-1"/>
    <property type="protein sequence ID" value="ENSP00000428589.2"/>
    <property type="gene ID" value="ENSG00000155506.19"/>
</dbReference>
<dbReference type="GeneID" id="23367"/>
<dbReference type="KEGG" id="hsa:23367"/>
<dbReference type="MANE-Select" id="ENST00000518297.6">
    <property type="protein sequence ID" value="ENSP00000428589.2"/>
    <property type="RefSeq nucleotide sequence ID" value="NM_033551.3"/>
    <property type="RefSeq protein sequence ID" value="NP_291029.2"/>
</dbReference>
<dbReference type="UCSC" id="uc003lvo.4">
    <molecule id="Q6PKG0-1"/>
    <property type="organism name" value="human"/>
</dbReference>
<dbReference type="AGR" id="HGNC:29531"/>
<dbReference type="CTD" id="23367"/>
<dbReference type="DisGeNET" id="23367"/>
<dbReference type="GeneCards" id="LARP1"/>
<dbReference type="HGNC" id="HGNC:29531">
    <property type="gene designation" value="LARP1"/>
</dbReference>
<dbReference type="HPA" id="ENSG00000155506">
    <property type="expression patterns" value="Low tissue specificity"/>
</dbReference>
<dbReference type="MIM" id="612059">
    <property type="type" value="gene"/>
</dbReference>
<dbReference type="neXtProt" id="NX_Q6PKG0"/>
<dbReference type="OpenTargets" id="ENSG00000155506"/>
<dbReference type="PharmGKB" id="PA142671564"/>
<dbReference type="VEuPathDB" id="HostDB:ENSG00000155506"/>
<dbReference type="eggNOG" id="KOG2590">
    <property type="taxonomic scope" value="Eukaryota"/>
</dbReference>
<dbReference type="GeneTree" id="ENSGT00940000159577"/>
<dbReference type="HOGENOM" id="CLU_003957_1_0_1"/>
<dbReference type="InParanoid" id="Q6PKG0"/>
<dbReference type="OMA" id="NHKRHPA"/>
<dbReference type="OrthoDB" id="340227at2759"/>
<dbReference type="PAN-GO" id="Q6PKG0">
    <property type="GO annotations" value="4 GO annotations based on evolutionary models"/>
</dbReference>
<dbReference type="PhylomeDB" id="Q6PKG0"/>
<dbReference type="TreeFam" id="TF314516"/>
<dbReference type="PathwayCommons" id="Q6PKG0"/>
<dbReference type="Reactome" id="R-HSA-9705671">
    <property type="pathway name" value="SARS-CoV-2 activates/modulates innate and adaptive immune responses"/>
</dbReference>
<dbReference type="SignaLink" id="Q6PKG0"/>
<dbReference type="SIGNOR" id="Q6PKG0"/>
<dbReference type="BioGRID-ORCS" id="23367">
    <property type="hits" value="150 hits in 1177 CRISPR screens"/>
</dbReference>
<dbReference type="CD-CODE" id="232F8A39">
    <property type="entry name" value="P-body"/>
</dbReference>
<dbReference type="CD-CODE" id="DEE660B4">
    <property type="entry name" value="Stress granule"/>
</dbReference>
<dbReference type="ChiTaRS" id="LARP1">
    <property type="organism name" value="human"/>
</dbReference>
<dbReference type="EvolutionaryTrace" id="Q6PKG0"/>
<dbReference type="GeneWiki" id="LARP1"/>
<dbReference type="GenomeRNAi" id="23367"/>
<dbReference type="Pharos" id="Q6PKG0">
    <property type="development level" value="Tbio"/>
</dbReference>
<dbReference type="PRO" id="PR:Q6PKG0"/>
<dbReference type="Proteomes" id="UP000005640">
    <property type="component" value="Chromosome 5"/>
</dbReference>
<dbReference type="RNAct" id="Q6PKG0">
    <property type="molecule type" value="protein"/>
</dbReference>
<dbReference type="Bgee" id="ENSG00000155506">
    <property type="expression patterns" value="Expressed in superior vestibular nucleus and 218 other cell types or tissues"/>
</dbReference>
<dbReference type="ExpressionAtlas" id="Q6PKG0">
    <property type="expression patterns" value="baseline and differential"/>
</dbReference>
<dbReference type="GO" id="GO:0005737">
    <property type="term" value="C:cytoplasm"/>
    <property type="evidence" value="ECO:0000314"/>
    <property type="project" value="UniProtKB"/>
</dbReference>
<dbReference type="GO" id="GO:0010494">
    <property type="term" value="C:cytoplasmic stress granule"/>
    <property type="evidence" value="ECO:0000314"/>
    <property type="project" value="UniProtKB"/>
</dbReference>
<dbReference type="GO" id="GO:0005829">
    <property type="term" value="C:cytosol"/>
    <property type="evidence" value="ECO:0000318"/>
    <property type="project" value="GO_Central"/>
</dbReference>
<dbReference type="GO" id="GO:0016020">
    <property type="term" value="C:membrane"/>
    <property type="evidence" value="ECO:0007005"/>
    <property type="project" value="UniProtKB"/>
</dbReference>
<dbReference type="GO" id="GO:0045296">
    <property type="term" value="F:cadherin binding"/>
    <property type="evidence" value="ECO:0007005"/>
    <property type="project" value="BHF-UCL"/>
</dbReference>
<dbReference type="GO" id="GO:0008190">
    <property type="term" value="F:eukaryotic initiation factor 4E binding"/>
    <property type="evidence" value="ECO:0000353"/>
    <property type="project" value="UniProtKB"/>
</dbReference>
<dbReference type="GO" id="GO:0003730">
    <property type="term" value="F:mRNA 3'-UTR binding"/>
    <property type="evidence" value="ECO:0000314"/>
    <property type="project" value="UniProtKB"/>
</dbReference>
<dbReference type="GO" id="GO:0048027">
    <property type="term" value="F:mRNA 5'-UTR binding"/>
    <property type="evidence" value="ECO:0000314"/>
    <property type="project" value="UniProtKB"/>
</dbReference>
<dbReference type="GO" id="GO:0043024">
    <property type="term" value="F:ribosomal small subunit binding"/>
    <property type="evidence" value="ECO:0000314"/>
    <property type="project" value="UniProtKB"/>
</dbReference>
<dbReference type="GO" id="GO:0000340">
    <property type="term" value="F:RNA 7-methylguanosine cap binding"/>
    <property type="evidence" value="ECO:0000314"/>
    <property type="project" value="UniProtKB"/>
</dbReference>
<dbReference type="GO" id="GO:0003723">
    <property type="term" value="F:RNA binding"/>
    <property type="evidence" value="ECO:0007005"/>
    <property type="project" value="UniProtKB"/>
</dbReference>
<dbReference type="GO" id="GO:0000339">
    <property type="term" value="F:RNA cap binding"/>
    <property type="evidence" value="ECO:0000314"/>
    <property type="project" value="UniProtKB"/>
</dbReference>
<dbReference type="GO" id="GO:0008494">
    <property type="term" value="F:translation activator activity"/>
    <property type="evidence" value="ECO:0000315"/>
    <property type="project" value="UniProtKB"/>
</dbReference>
<dbReference type="GO" id="GO:0031369">
    <property type="term" value="F:translation initiation factor binding"/>
    <property type="evidence" value="ECO:0000314"/>
    <property type="project" value="UniProtKB"/>
</dbReference>
<dbReference type="GO" id="GO:0008283">
    <property type="term" value="P:cell population proliferation"/>
    <property type="evidence" value="ECO:0000315"/>
    <property type="project" value="UniProtKB"/>
</dbReference>
<dbReference type="GO" id="GO:0072752">
    <property type="term" value="P:cellular response to rapamycin"/>
    <property type="evidence" value="ECO:0000315"/>
    <property type="project" value="UniProtKB"/>
</dbReference>
<dbReference type="GO" id="GO:0048255">
    <property type="term" value="P:mRNA stabilization"/>
    <property type="evidence" value="ECO:0000315"/>
    <property type="project" value="UniProtKB"/>
</dbReference>
<dbReference type="GO" id="GO:0017148">
    <property type="term" value="P:negative regulation of translation"/>
    <property type="evidence" value="ECO:0000315"/>
    <property type="project" value="UniProtKB"/>
</dbReference>
<dbReference type="GO" id="GO:0045947">
    <property type="term" value="P:negative regulation of translational initiation"/>
    <property type="evidence" value="ECO:0000315"/>
    <property type="project" value="UniProtKB"/>
</dbReference>
<dbReference type="GO" id="GO:0016239">
    <property type="term" value="P:positive regulation of macroautophagy"/>
    <property type="evidence" value="ECO:0000315"/>
    <property type="project" value="BHF-UCL"/>
</dbReference>
<dbReference type="GO" id="GO:0045727">
    <property type="term" value="P:positive regulation of translation"/>
    <property type="evidence" value="ECO:0000318"/>
    <property type="project" value="GO_Central"/>
</dbReference>
<dbReference type="GO" id="GO:0045948">
    <property type="term" value="P:positive regulation of translational initiation"/>
    <property type="evidence" value="ECO:0000315"/>
    <property type="project" value="CACAO"/>
</dbReference>
<dbReference type="GO" id="GO:0045070">
    <property type="term" value="P:positive regulation of viral genome replication"/>
    <property type="evidence" value="ECO:0000315"/>
    <property type="project" value="UniProtKB"/>
</dbReference>
<dbReference type="GO" id="GO:0010608">
    <property type="term" value="P:post-transcriptional regulation of gene expression"/>
    <property type="evidence" value="ECO:0000314"/>
    <property type="project" value="FlyBase"/>
</dbReference>
<dbReference type="GO" id="GO:1990928">
    <property type="term" value="P:response to amino acid starvation"/>
    <property type="evidence" value="ECO:0000315"/>
    <property type="project" value="UniProtKB"/>
</dbReference>
<dbReference type="GO" id="GO:0031929">
    <property type="term" value="P:TOR signaling"/>
    <property type="evidence" value="ECO:0000315"/>
    <property type="project" value="UniProtKB"/>
</dbReference>
<dbReference type="GO" id="GO:0038202">
    <property type="term" value="P:TORC1 signaling"/>
    <property type="evidence" value="ECO:0000315"/>
    <property type="project" value="UniProtKB"/>
</dbReference>
<dbReference type="GO" id="GO:0006413">
    <property type="term" value="P:translational initiation"/>
    <property type="evidence" value="ECO:0000315"/>
    <property type="project" value="UniProtKB"/>
</dbReference>
<dbReference type="CDD" id="cd08037">
    <property type="entry name" value="LARP_1"/>
    <property type="match status" value="1"/>
</dbReference>
<dbReference type="FunFam" id="1.10.10.10:FF:000131">
    <property type="entry name" value="la-related protein 1B isoform X2"/>
    <property type="match status" value="1"/>
</dbReference>
<dbReference type="Gene3D" id="1.10.10.10">
    <property type="entry name" value="Winged helix-like DNA-binding domain superfamily/Winged helix DNA-binding domain"/>
    <property type="match status" value="1"/>
</dbReference>
<dbReference type="InterPro" id="IPR006607">
    <property type="entry name" value="DM15"/>
</dbReference>
<dbReference type="InterPro" id="IPR045180">
    <property type="entry name" value="La_dom_prot"/>
</dbReference>
<dbReference type="InterPro" id="IPR006630">
    <property type="entry name" value="La_HTH"/>
</dbReference>
<dbReference type="InterPro" id="IPR036388">
    <property type="entry name" value="WH-like_DNA-bd_sf"/>
</dbReference>
<dbReference type="InterPro" id="IPR036390">
    <property type="entry name" value="WH_DNA-bd_sf"/>
</dbReference>
<dbReference type="PANTHER" id="PTHR22792:SF51">
    <property type="entry name" value="LA-RELATED PROTEIN 1"/>
    <property type="match status" value="1"/>
</dbReference>
<dbReference type="PANTHER" id="PTHR22792">
    <property type="entry name" value="LUPUS LA PROTEIN-RELATED"/>
    <property type="match status" value="1"/>
</dbReference>
<dbReference type="Pfam" id="PF05383">
    <property type="entry name" value="La"/>
    <property type="match status" value="1"/>
</dbReference>
<dbReference type="Pfam" id="PF21071">
    <property type="entry name" value="LARP1_HEAT"/>
    <property type="match status" value="1"/>
</dbReference>
<dbReference type="SMART" id="SM00684">
    <property type="entry name" value="DM15"/>
    <property type="match status" value="3"/>
</dbReference>
<dbReference type="SMART" id="SM00715">
    <property type="entry name" value="LA"/>
    <property type="match status" value="1"/>
</dbReference>
<dbReference type="SUPFAM" id="SSF46785">
    <property type="entry name" value="Winged helix' DNA-binding domain"/>
    <property type="match status" value="1"/>
</dbReference>
<dbReference type="PROSITE" id="PS50961">
    <property type="entry name" value="HTH_LA"/>
    <property type="match status" value="1"/>
</dbReference>
<feature type="initiator methionine" description="Removed" evidence="15 30 35 36">
    <location>
        <position position="1"/>
    </location>
</feature>
<feature type="chain" id="PRO_0000207609" description="La-related protein 1">
    <location>
        <begin position="2"/>
        <end position="1096"/>
    </location>
</feature>
<feature type="domain" description="HTH La-type RNA-binding" evidence="2">
    <location>
        <begin position="397"/>
        <end position="487"/>
    </location>
</feature>
<feature type="region of interest" description="Disordered" evidence="3">
    <location>
        <begin position="1"/>
        <end position="356"/>
    </location>
</feature>
<feature type="region of interest" description="Required for interaction with PABPC1" evidence="14">
    <location>
        <begin position="77"/>
        <end position="573"/>
    </location>
</feature>
<feature type="region of interest" description="Disordered" evidence="3">
    <location>
        <begin position="511"/>
        <end position="598"/>
    </location>
</feature>
<feature type="region of interest" description="Required for interaction with RPTOR and for repression of mRNAs with a 5'TOP motif" evidence="14">
    <location>
        <begin position="574"/>
        <end position="1096"/>
    </location>
</feature>
<feature type="region of interest" description="Disordered" evidence="3">
    <location>
        <begin position="759"/>
        <end position="861"/>
    </location>
</feature>
<feature type="region of interest" description="Interaction with mRNA" evidence="4 9">
    <location>
        <begin position="873"/>
        <end position="1023"/>
    </location>
</feature>
<feature type="region of interest" description="Interaction with 7-methylguanosine mRNA cap structure" evidence="11 22">
    <location>
        <begin position="956"/>
        <end position="999"/>
    </location>
</feature>
<feature type="region of interest" description="Disordered" evidence="3">
    <location>
        <begin position="1026"/>
        <end position="1096"/>
    </location>
</feature>
<feature type="compositionally biased region" description="Basic and acidic residues" evidence="3">
    <location>
        <begin position="63"/>
        <end position="76"/>
    </location>
</feature>
<feature type="compositionally biased region" description="Gly residues" evidence="3">
    <location>
        <begin position="97"/>
        <end position="110"/>
    </location>
</feature>
<feature type="compositionally biased region" description="Low complexity" evidence="3">
    <location>
        <begin position="150"/>
        <end position="159"/>
    </location>
</feature>
<feature type="compositionally biased region" description="Basic and acidic residues" evidence="3">
    <location>
        <begin position="202"/>
        <end position="239"/>
    </location>
</feature>
<feature type="compositionally biased region" description="Basic residues" evidence="3">
    <location>
        <begin position="242"/>
        <end position="252"/>
    </location>
</feature>
<feature type="compositionally biased region" description="Basic and acidic residues" evidence="3">
    <location>
        <begin position="259"/>
        <end position="290"/>
    </location>
</feature>
<feature type="compositionally biased region" description="Basic and acidic residues" evidence="3">
    <location>
        <begin position="310"/>
        <end position="320"/>
    </location>
</feature>
<feature type="compositionally biased region" description="Basic residues" evidence="3">
    <location>
        <begin position="337"/>
        <end position="355"/>
    </location>
</feature>
<feature type="compositionally biased region" description="Low complexity" evidence="3">
    <location>
        <begin position="580"/>
        <end position="596"/>
    </location>
</feature>
<feature type="compositionally biased region" description="Polar residues" evidence="3">
    <location>
        <begin position="763"/>
        <end position="773"/>
    </location>
</feature>
<feature type="compositionally biased region" description="Low complexity" evidence="3">
    <location>
        <begin position="775"/>
        <end position="789"/>
    </location>
</feature>
<feature type="compositionally biased region" description="Basic and acidic residues" evidence="3">
    <location>
        <begin position="805"/>
        <end position="814"/>
    </location>
</feature>
<feature type="compositionally biased region" description="Polar residues" evidence="3">
    <location>
        <begin position="846"/>
        <end position="861"/>
    </location>
</feature>
<feature type="compositionally biased region" description="Polar residues" evidence="3">
    <location>
        <begin position="1084"/>
        <end position="1096"/>
    </location>
</feature>
<feature type="modified residue" description="N-acetylalanine" evidence="15 30 35 36">
    <location>
        <position position="2"/>
    </location>
</feature>
<feature type="modified residue" description="Phosphoserine" evidence="26 32 38">
    <location>
        <position position="75"/>
    </location>
</feature>
<feature type="modified residue" description="Phosphoserine" evidence="24 25 26 27 29 32 34 37 38">
    <location>
        <position position="90"/>
    </location>
</feature>
<feature type="modified residue" description="Phosphoserine" evidence="27 33 34 37">
    <location>
        <position position="143"/>
    </location>
</feature>
<feature type="modified residue" description="Phosphoserine" evidence="27">
    <location>
        <position position="165"/>
    </location>
</feature>
<feature type="modified residue" description="Phosphoserine" evidence="34">
    <location>
        <position position="215"/>
    </location>
</feature>
<feature type="modified residue" description="Phosphoserine" evidence="33 34">
    <location>
        <position position="220"/>
    </location>
</feature>
<feature type="modified residue" description="Phosphothreonine" evidence="1">
    <location>
        <position position="223"/>
    </location>
</feature>
<feature type="modified residue" description="Phosphoserine" evidence="1">
    <location>
        <position position="225"/>
    </location>
</feature>
<feature type="modified residue" description="Phosphoserine" evidence="1">
    <location>
        <position position="228"/>
    </location>
</feature>
<feature type="modified residue" description="Omega-N-methylarginine" evidence="1">
    <location>
        <position position="240"/>
    </location>
</feature>
<feature type="modified residue" description="Phosphoserine" evidence="1">
    <location>
        <position position="324"/>
    </location>
</feature>
<feature type="modified residue" description="Phosphoserine" evidence="1">
    <location>
        <position position="327"/>
    </location>
</feature>
<feature type="modified residue" description="Phosphothreonine" evidence="33 37">
    <location>
        <position position="376"/>
    </location>
</feature>
<feature type="modified residue" description="Phosphoserine" evidence="27 37">
    <location>
        <position position="517"/>
    </location>
</feature>
<feature type="modified residue" description="Phosphoserine" evidence="24 27 33 34 37">
    <location>
        <position position="521"/>
    </location>
</feature>
<feature type="modified residue" description="Phosphothreonine" evidence="15 24 27 29 33 34 37">
    <location>
        <position position="526"/>
    </location>
</feature>
<feature type="modified residue" description="Phosphoserine" evidence="33 34 37">
    <location>
        <position position="548"/>
    </location>
</feature>
<feature type="modified residue" description="Phosphoserine" evidence="37">
    <location>
        <position position="591"/>
    </location>
</feature>
<feature type="modified residue" description="Phosphoserine" evidence="24 27 28 32 33 34 37 38">
    <location>
        <position position="627"/>
    </location>
</feature>
<feature type="modified residue" description="Phosphoserine" evidence="27 32 33 34 38">
    <location>
        <position position="631"/>
    </location>
</feature>
<feature type="modified residue" description="Phosphothreonine" evidence="27 33 37 38">
    <location>
        <position position="649"/>
    </location>
</feature>
<feature type="modified residue" description="Phosphothreonine" evidence="27 32">
    <location>
        <position position="724"/>
    </location>
</feature>
<feature type="modified residue" description="Phosphoserine" evidence="12 24 33 34 37 38">
    <location>
        <position position="766"/>
    </location>
</feature>
<feature type="modified residue" description="Phosphothreonine" evidence="12">
    <location>
        <position position="769"/>
    </location>
</feature>
<feature type="modified residue" description="Phosphothreonine" evidence="12">
    <location>
        <position position="770"/>
    </location>
</feature>
<feature type="modified residue" description="Phosphoserine" evidence="15 24 27 29 33 34 37">
    <location>
        <position position="774"/>
    </location>
</feature>
<feature type="modified residue" description="Phosphotyrosine" evidence="34">
    <location>
        <position position="777"/>
    </location>
</feature>
<feature type="modified residue" description="Phosphothreonine" evidence="12">
    <location>
        <position position="782"/>
    </location>
</feature>
<feature type="modified residue" description="Phosphothreonine" evidence="12 37">
    <location>
        <position position="785"/>
    </location>
</feature>
<feature type="modified residue" description="Phosphothreonine" evidence="37">
    <location>
        <position position="788"/>
    </location>
</feature>
<feature type="modified residue" description="Phosphothreonine" evidence="12">
    <location>
        <position position="797"/>
    </location>
</feature>
<feature type="modified residue" description="Phosphoserine" evidence="12 27 32 37">
    <location>
        <position position="824"/>
    </location>
</feature>
<feature type="modified residue" description="Phosphothreonine" evidence="23">
    <location>
        <position position="845"/>
    </location>
</feature>
<feature type="modified residue" description="Phosphoserine" evidence="12">
    <location>
        <position position="847"/>
    </location>
</feature>
<feature type="modified residue" description="Phosphoserine" evidence="12 27">
    <location>
        <position position="851"/>
    </location>
</feature>
<feature type="modified residue" description="Phosphoserine" evidence="1">
    <location>
        <position position="853"/>
    </location>
</feature>
<feature type="modified residue" description="Phosphoserine" evidence="12">
    <location>
        <position position="861"/>
    </location>
</feature>
<feature type="modified residue" description="Phosphothreonine" evidence="1 12">
    <location>
        <position position="865"/>
    </location>
</feature>
<feature type="modified residue" description="Phosphoserine" evidence="12">
    <location>
        <position position="868"/>
    </location>
</feature>
<feature type="modified residue" description="N6-acetyllysine" evidence="31">
    <location>
        <position position="892"/>
    </location>
</feature>
<feature type="modified residue" description="N6-acetyllysine" evidence="31">
    <location>
        <position position="1017"/>
    </location>
</feature>
<feature type="modified residue" description="Phosphoserine" evidence="38">
    <location>
        <position position="1040"/>
    </location>
</feature>
<feature type="modified residue" description="Phosphoserine" evidence="12">
    <location>
        <position position="1058"/>
    </location>
</feature>
<feature type="modified residue" description="Phosphoserine" evidence="37">
    <location>
        <position position="1089"/>
    </location>
</feature>
<feature type="cross-link" description="Glycyl lysine isopeptide (Lys-Gly) (interchain with G-Cter in SUMO2)" evidence="40">
    <location>
        <position position="260"/>
    </location>
</feature>
<feature type="cross-link" description="Glycyl lysine isopeptide (Lys-Gly) (interchain with G-Cter in SUMO2)" evidence="39 40">
    <location>
        <position position="311"/>
    </location>
</feature>
<feature type="cross-link" description="Glycyl lysine isopeptide (Lys-Gly) (interchain with G-Cter in SUMO2)" evidence="40">
    <location>
        <position position="531"/>
    </location>
</feature>
<feature type="cross-link" description="Glycyl lysine isopeptide (Lys-Gly) (interchain with G-Cter in SUMO2)" evidence="40">
    <location>
        <position position="703"/>
    </location>
</feature>
<feature type="splice variant" id="VSP_015114" description="In isoform 2." evidence="16">
    <location>
        <begin position="1"/>
        <end position="77"/>
    </location>
</feature>
<feature type="splice variant" id="VSP_015115" description="In isoform 2." evidence="16">
    <original>PLQLPGAEGPAISDGEEGGGEPGAGGGAAGAAGAGRRDFVEAPPPKVNPWTKNALPPVLTTVNGQSP</original>
    <variation>MLWRVLLSKRPPFPHPELDFQEAPIPSCPGRLPGRKNSVALAAAPRKEPTGDREKPLPFPVLAPFSN</variation>
    <location>
        <begin position="78"/>
        <end position="144"/>
    </location>
</feature>
<feature type="mutagenesis site" description="Strongly reduced interaction with PABPC1." evidence="8">
    <location>
        <begin position="497"/>
        <end position="507"/>
    </location>
</feature>
<feature type="mutagenesis site" description="Strongly reduced interaction with PABPC1." evidence="8">
    <original>F</original>
    <variation>A</variation>
    <location>
        <position position="505"/>
    </location>
</feature>
<feature type="mutagenesis site" description="Loss of phosphorylation by MTOR; when associated with A-769. Decreased interaction with RPTOR and impaired dissociation from the 5'UTR of mRNA molecules; when associated with A-769; A-847 and A-1058." evidence="12">
    <original>S</original>
    <variation>A</variation>
    <location>
        <position position="766"/>
    </location>
</feature>
<feature type="mutagenesis site" description="Loss of phosphorylation by MTOR; when associated with A-766. Decreased interaction with RPTOR and impaired dissociation from the 5'UTR of mRNA molecules; when associated with A-766; A-847 and A-1058." evidence="12">
    <original>T</original>
    <variation>A</variation>
    <location>
        <position position="769"/>
    </location>
</feature>
<feature type="mutagenesis site" description="Strongly reduced phosphorylation mediated by Akt and RPS6KB1. Decreased interaction with RPTOR and impaired dissociation from the 5'UTR of mRNA molecules; when associated with A-766; A-769 and A-1058." evidence="12">
    <original>S</original>
    <variation>A</variation>
    <location>
        <position position="847"/>
    </location>
</feature>
<feature type="mutagenesis site" description="Abolishes RNA binding. Abolishes inhibition of EIF4G1 binding to mRNA molecules with a 5'TOP motif; when associated with A-960." evidence="9 11">
    <original>R</original>
    <variation>E</variation>
    <location>
        <position position="917"/>
    </location>
</feature>
<feature type="mutagenesis site" description="Abolishes RNA binding. Abolishes translational repression of mRNAs with a 5'TOP motif. Abolishes inhibition of EIF4G1 binding to mRNA molecules with a 5'TOP motif; when associated with E-917." evidence="9 11 14">
    <original>Y</original>
    <variation>A</variation>
    <location>
        <position position="960"/>
    </location>
</feature>
<feature type="mutagenesis site" description="Strongly decreased RNA binding." evidence="11">
    <original>E</original>
    <variation>R</variation>
    <location>
        <position position="963"/>
    </location>
</feature>
<feature type="mutagenesis site" description="Loss of interaction with RPTOR." evidence="8">
    <location>
        <begin position="966"/>
        <end position="970"/>
    </location>
</feature>
<feature type="mutagenesis site" description="No effect on interaction with RPTOR." evidence="8">
    <original>F</original>
    <variation>A</variation>
    <location>
        <position position="966"/>
    </location>
</feature>
<feature type="mutagenesis site" description="Strongly decreased RNA binding." evidence="11">
    <original>Y</original>
    <variation>A</variation>
    <location>
        <position position="999"/>
    </location>
</feature>
<feature type="mutagenesis site" description="Strongly reduced phosphorylation mediated by AKT and RPS6KB1. Decreased interaction with RPTOR and impaired dissociation from the 5'UTR of mRNA molecules; when associated with A-766; A-769 and A-847." evidence="12">
    <original>S</original>
    <variation>A</variation>
    <location>
        <position position="1058"/>
    </location>
</feature>
<feature type="sequence conflict" description="In Ref. 1; AAH33856." evidence="17" ref="1">
    <original>RNT</original>
    <variation>TRP</variation>
    <location>
        <begin position="778"/>
        <end position="780"/>
    </location>
</feature>
<feature type="sequence conflict" description="In Ref. 5; CAB61364." evidence="17" ref="5">
    <original>V</original>
    <variation>L</variation>
    <location>
        <position position="979"/>
    </location>
</feature>
<feature type="helix" evidence="45">
    <location>
        <begin position="401"/>
        <end position="414"/>
    </location>
</feature>
<feature type="helix" evidence="45">
    <location>
        <begin position="417"/>
        <end position="420"/>
    </location>
</feature>
<feature type="helix" evidence="45">
    <location>
        <begin position="424"/>
        <end position="429"/>
    </location>
</feature>
<feature type="helix" evidence="45">
    <location>
        <begin position="438"/>
        <end position="443"/>
    </location>
</feature>
<feature type="helix" evidence="45">
    <location>
        <begin position="445"/>
        <end position="450"/>
    </location>
</feature>
<feature type="helix" evidence="45">
    <location>
        <begin position="454"/>
        <end position="462"/>
    </location>
</feature>
<feature type="strand" evidence="45">
    <location>
        <begin position="465"/>
        <end position="470"/>
    </location>
</feature>
<feature type="strand" evidence="45">
    <location>
        <begin position="473"/>
        <end position="479"/>
    </location>
</feature>
<feature type="helix" evidence="45">
    <location>
        <begin position="480"/>
        <end position="482"/>
    </location>
</feature>
<feature type="helix" evidence="43">
    <location>
        <begin position="875"/>
        <end position="880"/>
    </location>
</feature>
<feature type="turn" evidence="42">
    <location>
        <begin position="882"/>
        <end position="884"/>
    </location>
</feature>
<feature type="helix" evidence="43">
    <location>
        <begin position="887"/>
        <end position="904"/>
    </location>
</feature>
<feature type="turn" evidence="44">
    <location>
        <begin position="906"/>
        <end position="908"/>
    </location>
</feature>
<feature type="helix" evidence="43">
    <location>
        <begin position="910"/>
        <end position="925"/>
    </location>
</feature>
<feature type="helix" evidence="43">
    <location>
        <begin position="929"/>
        <end position="945"/>
    </location>
</feature>
<feature type="helix" evidence="43">
    <location>
        <begin position="949"/>
        <end position="964"/>
    </location>
</feature>
<feature type="helix" evidence="43">
    <location>
        <begin position="968"/>
        <end position="983"/>
    </location>
</feature>
<feature type="helix" evidence="43">
    <location>
        <begin position="988"/>
        <end position="999"/>
    </location>
</feature>
<feature type="helix" evidence="41">
    <location>
        <begin position="1001"/>
        <end position="1004"/>
    </location>
</feature>
<feature type="helix" evidence="43">
    <location>
        <begin position="1009"/>
        <end position="1017"/>
    </location>
</feature>
<name>LARP1_HUMAN</name>
<gene>
    <name type="primary">LARP1</name>
    <name type="synonym">KIAA0731</name>
    <name type="synonym">LARP</name>
</gene>
<proteinExistence type="evidence at protein level"/>
<protein>
    <recommendedName>
        <fullName>La-related protein 1</fullName>
    </recommendedName>
    <alternativeName>
        <fullName>La ribonucleoprotein domain family member 1</fullName>
    </alternativeName>
</protein>
<sequence length="1096" mass="123510">MATQVEPLLPGGATLLQAEEHGGLVRKKPPPAPEGKGEPGPNDVRGGEPDGSARRPRPPCAKPHKEGTGQQERESPRPLQLPGAEGPAISDGEEGGGEPGAGGGAAGAAGAGRRDFVEAPPPKVNPWTKNALPPVLTTVNGQSPPEHSAPAKVVRAAVPKQRKGSKVGDFGDAINWPTPGEIAHKSVQPQSHKPQPTRKLPPKKDMKEQEKGEGSDSKESPKTKSDESGEEKNGDEDCQRGGQKKKGNKHKWVPLQIDMKPEVPREKLASRPTRPPEPRHIPANRGEIKGSESATYVPVAPPTPAWQPEIKPEPAWHDQDETSSVKSDGAGGARASFRGRGRGRGRGRGRGRGGTRTHFDYQFGYRKFDGVEGPRTPKYMNNITYYFDNVSSTELYSVDQELLKDYIKRQIEYYFSVDNLERDFFLRRKMDADGFLPITLIASFHRVQALTTDISLIFAALKDSKVVEIVDEKVRRREEPEKWPLPPIVDYSQTDFSQLLNCPEFVPRQHYQKETESAPGSPRAVTPVPTKTEEVSNLKTLPKGLSASLPDLDSENWIEVKKRPRPSPARPKKSEESRFSHLTSLPQQLPSQQLMSKDQDEQEELDFLFDEEMEQMDGRKNTFTAWSDEESDYEIDDRDVNKILIVTQTPHYMRRHPGGDRTGNHTSRAKMSAELAKVINDGLFYYEQDLWAEKFEPEYSQIKQEVENFKKVNMISREQFDTLTPEPPVDPNQEVPPGPPRFQQVPTDALANKLFGAPEPSTIARSLPTTVPESPNYRNTRTPRTPRTPQLKDSSQTSRFYPVVKEGRTLDAKMPRKRKTRHSSNPPLESHVGWVMDSREHRPRTASISSSPSEGTPTVGSYGCTPQSLPKFQHPSHELLKENGFTQHVYHKYRRRCLNERKRLGIGQSQEMNTLFRFWSFFLRDHFNKKMYEEFKQLALEDAKEGYRYGLECLFRYYSYGLEKKFRLDIFKDFQEETVKDYEAGQLYGLEKFWAFLKYSKAKNLDIDPKLQEYLGKFRRLEDFRVDPPMGEEGNHKRHSVVAGGGGGEGRKRCPSQSSSRPAAMISQPPTPPTGQPVREDAKWTSQHSNTQTLGK</sequence>
<comment type="function">
    <text evidence="4 5 7 8 9 11 12 13 14">RNA-binding protein that regulates the translation of specific target mRNA species downstream of the mTORC1 complex, in function of growth signals and nutrient availability (PubMed:20430826, PubMed:23711370, PubMed:24532714, PubMed:25940091, PubMed:28650797, PubMed:28673543, PubMed:29244122). Interacts on the one hand with the 3' poly-A tails that are present in all mRNA molecules, and on the other hand with the 7-methylguanosine cap structure of mRNAs containing a 5' terminal oligopyrimidine (5'TOP) motif, which is present in mRNAs encoding ribosomal proteins and several components of the translation machinery (PubMed:23711370, PubMed:25940091, PubMed:26206669, PubMed:28379136, PubMed:28650797, PubMed:29244122). The interaction with the 5' end of mRNAs containing a 5'TOP motif leads to translational repression by preventing the binding of EIF4G1 (PubMed:25940091, PubMed:28379136, PubMed:28650797, PubMed:29244122). When mTORC1 is activated, LARP1 is phosphorylated and dissociates from the 5' untranslated region (UTR) of mRNA (PubMed:25940091, PubMed:28650797). Does not prevent binding of EIF4G1 to mRNAs that lack a 5'TOP motif (PubMed:28379136). Interacts with the free 40S ribosome subunit and with ribosomes, both monosomes and polysomes (PubMed:20430826, PubMed:24532714, PubMed:25940091, PubMed:28673543). Under normal nutrient availability, interacts primarily with the 3' untranslated region (UTR) of mRNAs encoding ribosomal proteins and increases protein synthesis (PubMed:23711370, PubMed:28650797). Associates with actively translating ribosomes and stimulates translation of mRNAs containing a 5'TOP motif, thereby regulating protein synthesis, and as a consequence, cell growth and proliferation (PubMed:20430826, PubMed:24532714). Stabilizes mRNAs species with a 5'TOP motif, which is required to prevent apoptosis (PubMed:20430826, PubMed:23711370, PubMed:25940091, PubMed:28673543).</text>
</comment>
<comment type="function">
    <text evidence="10">(Microbial infection) Positively regulates the replication of dengue virus (DENV).</text>
</comment>
<comment type="subunit">
    <text evidence="4 5 7 8 10 12">Interacts with PABPC1/PABP (PubMed:20430826, PubMed:23711370, PubMed:24532714, PubMed:25940091, PubMed:28650797). Interacts with EIF4A1 (PubMed:24532714). Interacts with RPTOR (PubMed:24532714, PubMed:25940091, PubMed:28650797). Recruited to the active mTORC1 complex via interaction with RPTOR (PubMed:25940091, PubMed:28650797). Inhibition of mTORC1 activity strongly reduces interaction with RPTOR and the mTORC1 complex (PubMed:25940091, PubMed:28650797). Identified in a complex with mRNA, PABPC1, EIF4E and EIF4G1 (PubMed:20430826, PubMed:28650797). Found in a complex with PABPC1 and SHFL (PubMed:26735137).</text>
</comment>
<comment type="interaction">
    <interactant intactId="EBI-1052114">
        <id>Q6PKG0</id>
    </interactant>
    <interactant intactId="EBI-749265">
        <id>Q8N6L0</id>
        <label>KASH5</label>
    </interactant>
    <organismsDiffer>false</organismsDiffer>
    <experiments>3</experiments>
</comment>
<comment type="interaction">
    <interactant intactId="EBI-1052114">
        <id>Q6PKG0</id>
    </interactant>
    <interactant intactId="EBI-476295">
        <id>P31947</id>
        <label>SFN</label>
    </interactant>
    <organismsDiffer>false</organismsDiffer>
    <experiments>4</experiments>
</comment>
<comment type="interaction">
    <interactant intactId="EBI-1052114">
        <id>Q6PKG0</id>
    </interactant>
    <interactant intactId="EBI-356498">
        <id>P62258</id>
        <label>YWHAE</label>
    </interactant>
    <organismsDiffer>false</organismsDiffer>
    <experiments>6</experiments>
</comment>
<comment type="interaction">
    <interactant intactId="EBI-1052114">
        <id>Q6PKG0</id>
    </interactant>
    <interactant intactId="EBI-347088">
        <id>P63104</id>
        <label>YWHAZ</label>
    </interactant>
    <organismsDiffer>false</organismsDiffer>
    <experiments>4</experiments>
</comment>
<comment type="subcellular location">
    <subcellularLocation>
        <location evidence="4 7 12">Cytoplasm</location>
    </subcellularLocation>
    <subcellularLocation>
        <location evidence="7 8">Cytoplasmic granule</location>
    </subcellularLocation>
    <text evidence="7 8">Colocalizes with RPTOR and PABPC1 in cytoplasmic granules that resemble stress granules.</text>
</comment>
<comment type="alternative products">
    <event type="alternative splicing"/>
    <isoform>
        <id>Q6PKG0-1</id>
        <name>1</name>
        <sequence type="displayed"/>
    </isoform>
    <isoform>
        <id>Q6PKG0-3</id>
        <name>2</name>
        <sequence type="described" ref="VSP_015114 VSP_015115"/>
    </isoform>
</comment>
<comment type="induction">
    <text evidence="6">Up-regulated in a number of hepatocellular carcinoma cell lines and liver cancer lesions, as well as in patients with hepatocellular carcinoma with a lower survival rate (at protein level).</text>
</comment>
<comment type="domain">
    <text evidence="7 9 11 14">The C-terminal region mediates interaction with the mRNA and polysomes (PubMed:24532714, PubMed:26206669, PubMed:28379136). It is required for translational repression of mRNAs with a 5'TOP motif (PubMed:29244122).</text>
</comment>
<comment type="domain">
    <text evidence="14">The N-terminal region mediates interaction with PABPC1.</text>
</comment>
<comment type="PTM">
    <text evidence="12">Phosphorylated on multiple Ser and Thr residues in response to active mTORC1. Phosphorylation is important for interaction with RPTOR and the mTORC1 complex. Phosphorylation promotes dissociation from the 5'UTR of mRNA molecules with a 5'TOP motif.</text>
</comment>
<comment type="similarity">
    <text evidence="17">Belongs to the LARP family.</text>
</comment>
<comment type="caution">
    <text evidence="4 5 7 8 12">Conflicting results are reported regarding the interaction with PABPC1. Some studies found that the interaction depends on the presence of mRNA (PubMed:23711370, PubMed:28650797). Others found that the interaction is direct and does not depend on the presence of mRNA (PubMed:20430826, PubMed:24532714, PubMed:25940091).</text>
</comment>
<comment type="sequence caution" evidence="17">
    <conflict type="erroneous initiation">
        <sequence resource="EMBL-CDS" id="AAH33856"/>
    </conflict>
    <text>Truncated N-terminus.</text>
</comment>
<comment type="sequence caution" evidence="17">
    <conflict type="miscellaneous discrepancy">
        <sequence resource="EMBL-CDS" id="BAA34451"/>
    </conflict>
    <text>Aberrant splicing.</text>
</comment>
<organism>
    <name type="scientific">Homo sapiens</name>
    <name type="common">Human</name>
    <dbReference type="NCBI Taxonomy" id="9606"/>
    <lineage>
        <taxon>Eukaryota</taxon>
        <taxon>Metazoa</taxon>
        <taxon>Chordata</taxon>
        <taxon>Craniata</taxon>
        <taxon>Vertebrata</taxon>
        <taxon>Euteleostomi</taxon>
        <taxon>Mammalia</taxon>
        <taxon>Eutheria</taxon>
        <taxon>Euarchontoglires</taxon>
        <taxon>Primates</taxon>
        <taxon>Haplorrhini</taxon>
        <taxon>Catarrhini</taxon>
        <taxon>Hominidae</taxon>
        <taxon>Homo</taxon>
    </lineage>
</organism>
<keyword id="KW-0002">3D-structure</keyword>
<keyword id="KW-0007">Acetylation</keyword>
<keyword id="KW-0025">Alternative splicing</keyword>
<keyword id="KW-0963">Cytoplasm</keyword>
<keyword id="KW-0903">Direct protein sequencing</keyword>
<keyword id="KW-1017">Isopeptide bond</keyword>
<keyword id="KW-0488">Methylation</keyword>
<keyword id="KW-0597">Phosphoprotein</keyword>
<keyword id="KW-0648">Protein biosynthesis</keyword>
<keyword id="KW-1267">Proteomics identification</keyword>
<keyword id="KW-1185">Reference proteome</keyword>
<keyword id="KW-0678">Repressor</keyword>
<keyword id="KW-0694">RNA-binding</keyword>
<keyword id="KW-0810">Translation regulation</keyword>
<keyword id="KW-0832">Ubl conjugation</keyword>
<evidence type="ECO:0000250" key="1">
    <source>
        <dbReference type="UniProtKB" id="Q6ZQ58"/>
    </source>
</evidence>
<evidence type="ECO:0000255" key="2">
    <source>
        <dbReference type="PROSITE-ProRule" id="PRU00332"/>
    </source>
</evidence>
<evidence type="ECO:0000256" key="3">
    <source>
        <dbReference type="SAM" id="MobiDB-lite"/>
    </source>
</evidence>
<evidence type="ECO:0000269" key="4">
    <source>
    </source>
</evidence>
<evidence type="ECO:0000269" key="5">
    <source>
    </source>
</evidence>
<evidence type="ECO:0000269" key="6">
    <source>
    </source>
</evidence>
<evidence type="ECO:0000269" key="7">
    <source>
    </source>
</evidence>
<evidence type="ECO:0000269" key="8">
    <source>
    </source>
</evidence>
<evidence type="ECO:0000269" key="9">
    <source>
    </source>
</evidence>
<evidence type="ECO:0000269" key="10">
    <source>
    </source>
</evidence>
<evidence type="ECO:0000269" key="11">
    <source>
    </source>
</evidence>
<evidence type="ECO:0000269" key="12">
    <source>
    </source>
</evidence>
<evidence type="ECO:0000269" key="13">
    <source>
    </source>
</evidence>
<evidence type="ECO:0000269" key="14">
    <source>
    </source>
</evidence>
<evidence type="ECO:0000269" key="15">
    <source ref="3"/>
</evidence>
<evidence type="ECO:0000303" key="16">
    <source>
    </source>
</evidence>
<evidence type="ECO:0000305" key="17"/>
<evidence type="ECO:0007744" key="18">
    <source>
        <dbReference type="PDB" id="4ZC4"/>
    </source>
</evidence>
<evidence type="ECO:0007744" key="19">
    <source>
        <dbReference type="PDB" id="5C0V"/>
    </source>
</evidence>
<evidence type="ECO:0007744" key="20">
    <source>
        <dbReference type="PDB" id="5V4R"/>
    </source>
</evidence>
<evidence type="ECO:0007744" key="21">
    <source>
        <dbReference type="PDB" id="5V7C"/>
    </source>
</evidence>
<evidence type="ECO:0007744" key="22">
    <source>
        <dbReference type="PDB" id="5V87"/>
    </source>
</evidence>
<evidence type="ECO:0007744" key="23">
    <source>
    </source>
</evidence>
<evidence type="ECO:0007744" key="24">
    <source>
    </source>
</evidence>
<evidence type="ECO:0007744" key="25">
    <source>
    </source>
</evidence>
<evidence type="ECO:0007744" key="26">
    <source>
    </source>
</evidence>
<evidence type="ECO:0007744" key="27">
    <source>
    </source>
</evidence>
<evidence type="ECO:0007744" key="28">
    <source>
    </source>
</evidence>
<evidence type="ECO:0007744" key="29">
    <source>
    </source>
</evidence>
<evidence type="ECO:0007744" key="30">
    <source>
    </source>
</evidence>
<evidence type="ECO:0007744" key="31">
    <source>
    </source>
</evidence>
<evidence type="ECO:0007744" key="32">
    <source>
    </source>
</evidence>
<evidence type="ECO:0007744" key="33">
    <source>
    </source>
</evidence>
<evidence type="ECO:0007744" key="34">
    <source>
    </source>
</evidence>
<evidence type="ECO:0007744" key="35">
    <source>
    </source>
</evidence>
<evidence type="ECO:0007744" key="36">
    <source>
    </source>
</evidence>
<evidence type="ECO:0007744" key="37">
    <source>
    </source>
</evidence>
<evidence type="ECO:0007744" key="38">
    <source>
    </source>
</evidence>
<evidence type="ECO:0007744" key="39">
    <source>
    </source>
</evidence>
<evidence type="ECO:0007744" key="40">
    <source>
    </source>
</evidence>
<evidence type="ECO:0007829" key="41">
    <source>
        <dbReference type="PDB" id="5C0V"/>
    </source>
</evidence>
<evidence type="ECO:0007829" key="42">
    <source>
        <dbReference type="PDB" id="5V4R"/>
    </source>
</evidence>
<evidence type="ECO:0007829" key="43">
    <source>
        <dbReference type="PDB" id="5V87"/>
    </source>
</evidence>
<evidence type="ECO:0007829" key="44">
    <source>
        <dbReference type="PDB" id="6PW3"/>
    </source>
</evidence>
<evidence type="ECO:0007829" key="45">
    <source>
        <dbReference type="PDB" id="7SOQ"/>
    </source>
</evidence>
<reference key="1">
    <citation type="journal article" date="2004" name="Genome Res.">
        <title>The status, quality, and expansion of the NIH full-length cDNA project: the Mammalian Gene Collection (MGC).</title>
        <authorList>
            <consortium name="The MGC Project Team"/>
        </authorList>
    </citation>
    <scope>NUCLEOTIDE SEQUENCE [LARGE SCALE MRNA] (ISOFORM 2)</scope>
    <source>
        <tissue>Cervix</tissue>
        <tissue>Placenta</tissue>
    </source>
</reference>
<reference key="2">
    <citation type="journal article" date="2004" name="Nat. Genet.">
        <title>Complete sequencing and characterization of 21,243 full-length human cDNAs.</title>
        <authorList>
            <person name="Ota T."/>
            <person name="Suzuki Y."/>
            <person name="Nishikawa T."/>
            <person name="Otsuki T."/>
            <person name="Sugiyama T."/>
            <person name="Irie R."/>
            <person name="Wakamatsu A."/>
            <person name="Hayashi K."/>
            <person name="Sato H."/>
            <person name="Nagai K."/>
            <person name="Kimura K."/>
            <person name="Makita H."/>
            <person name="Sekine M."/>
            <person name="Obayashi M."/>
            <person name="Nishi T."/>
            <person name="Shibahara T."/>
            <person name="Tanaka T."/>
            <person name="Ishii S."/>
            <person name="Yamamoto J."/>
            <person name="Saito K."/>
            <person name="Kawai Y."/>
            <person name="Isono Y."/>
            <person name="Nakamura Y."/>
            <person name="Nagahari K."/>
            <person name="Murakami K."/>
            <person name="Yasuda T."/>
            <person name="Iwayanagi T."/>
            <person name="Wagatsuma M."/>
            <person name="Shiratori A."/>
            <person name="Sudo H."/>
            <person name="Hosoiri T."/>
            <person name="Kaku Y."/>
            <person name="Kodaira H."/>
            <person name="Kondo H."/>
            <person name="Sugawara M."/>
            <person name="Takahashi M."/>
            <person name="Kanda K."/>
            <person name="Yokoi T."/>
            <person name="Furuya T."/>
            <person name="Kikkawa E."/>
            <person name="Omura Y."/>
            <person name="Abe K."/>
            <person name="Kamihara K."/>
            <person name="Katsuta N."/>
            <person name="Sato K."/>
            <person name="Tanikawa M."/>
            <person name="Yamazaki M."/>
            <person name="Ninomiya K."/>
            <person name="Ishibashi T."/>
            <person name="Yamashita H."/>
            <person name="Murakawa K."/>
            <person name="Fujimori K."/>
            <person name="Tanai H."/>
            <person name="Kimata M."/>
            <person name="Watanabe M."/>
            <person name="Hiraoka S."/>
            <person name="Chiba Y."/>
            <person name="Ishida S."/>
            <person name="Ono Y."/>
            <person name="Takiguchi S."/>
            <person name="Watanabe S."/>
            <person name="Yosida M."/>
            <person name="Hotuta T."/>
            <person name="Kusano J."/>
            <person name="Kanehori K."/>
            <person name="Takahashi-Fujii A."/>
            <person name="Hara H."/>
            <person name="Tanase T.-O."/>
            <person name="Nomura Y."/>
            <person name="Togiya S."/>
            <person name="Komai F."/>
            <person name="Hara R."/>
            <person name="Takeuchi K."/>
            <person name="Arita M."/>
            <person name="Imose N."/>
            <person name="Musashino K."/>
            <person name="Yuuki H."/>
            <person name="Oshima A."/>
            <person name="Sasaki N."/>
            <person name="Aotsuka S."/>
            <person name="Yoshikawa Y."/>
            <person name="Matsunawa H."/>
            <person name="Ichihara T."/>
            <person name="Shiohata N."/>
            <person name="Sano S."/>
            <person name="Moriya S."/>
            <person name="Momiyama H."/>
            <person name="Satoh N."/>
            <person name="Takami S."/>
            <person name="Terashima Y."/>
            <person name="Suzuki O."/>
            <person name="Nakagawa S."/>
            <person name="Senoh A."/>
            <person name="Mizoguchi H."/>
            <person name="Goto Y."/>
            <person name="Shimizu F."/>
            <person name="Wakebe H."/>
            <person name="Hishigaki H."/>
            <person name="Watanabe T."/>
            <person name="Sugiyama A."/>
            <person name="Takemoto M."/>
            <person name="Kawakami B."/>
            <person name="Yamazaki M."/>
            <person name="Watanabe K."/>
            <person name="Kumagai A."/>
            <person name="Itakura S."/>
            <person name="Fukuzumi Y."/>
            <person name="Fujimori Y."/>
            <person name="Komiyama M."/>
            <person name="Tashiro H."/>
            <person name="Tanigami A."/>
            <person name="Fujiwara T."/>
            <person name="Ono T."/>
            <person name="Yamada K."/>
            <person name="Fujii Y."/>
            <person name="Ozaki K."/>
            <person name="Hirao M."/>
            <person name="Ohmori Y."/>
            <person name="Kawabata A."/>
            <person name="Hikiji T."/>
            <person name="Kobatake N."/>
            <person name="Inagaki H."/>
            <person name="Ikema Y."/>
            <person name="Okamoto S."/>
            <person name="Okitani R."/>
            <person name="Kawakami T."/>
            <person name="Noguchi S."/>
            <person name="Itoh T."/>
            <person name="Shigeta K."/>
            <person name="Senba T."/>
            <person name="Matsumura K."/>
            <person name="Nakajima Y."/>
            <person name="Mizuno T."/>
            <person name="Morinaga M."/>
            <person name="Sasaki M."/>
            <person name="Togashi T."/>
            <person name="Oyama M."/>
            <person name="Hata H."/>
            <person name="Watanabe M."/>
            <person name="Komatsu T."/>
            <person name="Mizushima-Sugano J."/>
            <person name="Satoh T."/>
            <person name="Shirai Y."/>
            <person name="Takahashi Y."/>
            <person name="Nakagawa K."/>
            <person name="Okumura K."/>
            <person name="Nagase T."/>
            <person name="Nomura N."/>
            <person name="Kikuchi H."/>
            <person name="Masuho Y."/>
            <person name="Yamashita R."/>
            <person name="Nakai K."/>
            <person name="Yada T."/>
            <person name="Nakamura Y."/>
            <person name="Ohara O."/>
            <person name="Isogai T."/>
            <person name="Sugano S."/>
        </authorList>
    </citation>
    <scope>NUCLEOTIDE SEQUENCE [LARGE SCALE MRNA] OF 1-816 (ISOFORM 1)</scope>
    <source>
        <tissue>Brain</tissue>
    </source>
</reference>
<reference key="3">
    <citation type="submission" date="2008-02" db="UniProtKB">
        <authorList>
            <person name="Bienvenut W.V."/>
            <person name="Calvo F."/>
            <person name="Matallanas D."/>
            <person name="Cooper W.N."/>
            <person name="Kolch W."/>
            <person name="Heiserich L."/>
            <person name="Boulahbel H."/>
            <person name="Gottlieb E."/>
        </authorList>
    </citation>
    <scope>PROTEIN SEQUENCE OF 2-26; 115-123; 167-185; 252-265; 357-366; 410-422; 429-473; 524-539; 579-597; 643-654; 695-703; 718-778; 904-924; 937-944; 949-964 AND 1004-1017</scope>
    <scope>CLEAVAGE OF INITIATOR METHIONINE</scope>
    <scope>ACETYLATION AT ALA-2</scope>
    <scope>PHOSPHORYLATION AT THR-526 AND SER-774</scope>
    <scope>IDENTIFICATION BY MASS SPECTROMETRY</scope>
    <source>
        <tissue>Cervix carcinoma</tissue>
        <tissue>Colon carcinoma</tissue>
        <tissue>Mammary carcinoma</tissue>
    </source>
</reference>
<reference key="4">
    <citation type="journal article" date="1998" name="DNA Res.">
        <title>Prediction of the coding sequences of unidentified human genes. XI. The complete sequences of 100 new cDNA clones from brain which code for large proteins in vitro.</title>
        <authorList>
            <person name="Nagase T."/>
            <person name="Ishikawa K."/>
            <person name="Suyama M."/>
            <person name="Kikuno R."/>
            <person name="Miyajima N."/>
            <person name="Tanaka A."/>
            <person name="Kotani H."/>
            <person name="Nomura N."/>
            <person name="Ohara O."/>
        </authorList>
    </citation>
    <scope>NUCLEOTIDE SEQUENCE [LARGE SCALE MRNA] OF 123-1096 (ISOFORM 1)</scope>
    <source>
        <tissue>Brain</tissue>
    </source>
</reference>
<reference key="5">
    <citation type="journal article" date="2007" name="BMC Genomics">
        <title>The full-ORF clone resource of the German cDNA consortium.</title>
        <authorList>
            <person name="Bechtel S."/>
            <person name="Rosenfelder H."/>
            <person name="Duda A."/>
            <person name="Schmidt C.P."/>
            <person name="Ernst U."/>
            <person name="Wellenreuther R."/>
            <person name="Mehrle A."/>
            <person name="Schuster C."/>
            <person name="Bahr A."/>
            <person name="Bloecker H."/>
            <person name="Heubner D."/>
            <person name="Hoerlein A."/>
            <person name="Michel G."/>
            <person name="Wedler H."/>
            <person name="Koehrer K."/>
            <person name="Ottenwaelder B."/>
            <person name="Poustka A."/>
            <person name="Wiemann S."/>
            <person name="Schupp I."/>
        </authorList>
    </citation>
    <scope>NUCLEOTIDE SEQUENCE [LARGE SCALE MRNA] OF 538-1096</scope>
    <source>
        <tissue>Mammary cancer</tissue>
    </source>
</reference>
<reference key="6">
    <citation type="journal article" date="2006" name="Cell">
        <title>Global, in vivo, and site-specific phosphorylation dynamics in signaling networks.</title>
        <authorList>
            <person name="Olsen J.V."/>
            <person name="Blagoev B."/>
            <person name="Gnad F."/>
            <person name="Macek B."/>
            <person name="Kumar C."/>
            <person name="Mortensen P."/>
            <person name="Mann M."/>
        </authorList>
    </citation>
    <scope>PHOSPHORYLATION [LARGE SCALE ANALYSIS] AT SER-90; SER-521; THR-526; SER-627; SER-766 AND SER-774</scope>
    <scope>IDENTIFICATION BY MASS SPECTROMETRY [LARGE SCALE ANALYSIS]</scope>
    <source>
        <tissue>Cervix carcinoma</tissue>
    </source>
</reference>
<reference key="7">
    <citation type="journal article" date="2006" name="Nat. Biotechnol.">
        <title>A probability-based approach for high-throughput protein phosphorylation analysis and site localization.</title>
        <authorList>
            <person name="Beausoleil S.A."/>
            <person name="Villen J."/>
            <person name="Gerber S.A."/>
            <person name="Rush J."/>
            <person name="Gygi S.P."/>
        </authorList>
    </citation>
    <scope>PHOSPHORYLATION [LARGE SCALE ANALYSIS] AT THR-845</scope>
    <scope>IDENTIFICATION BY MASS SPECTROMETRY [LARGE SCALE ANALYSIS]</scope>
    <source>
        <tissue>Cervix carcinoma</tissue>
    </source>
</reference>
<reference key="8">
    <citation type="journal article" date="2007" name="J. Proteome Res.">
        <title>Improved titanium dioxide enrichment of phosphopeptides from HeLa cells and high confident phosphopeptide identification by cross-validation of MS/MS and MS/MS/MS spectra.</title>
        <authorList>
            <person name="Yu L.R."/>
            <person name="Zhu Z."/>
            <person name="Chan K.C."/>
            <person name="Issaq H.J."/>
            <person name="Dimitrov D.S."/>
            <person name="Veenstra T.D."/>
        </authorList>
    </citation>
    <scope>IDENTIFICATION BY MASS SPECTROMETRY [LARGE SCALE ANALYSIS]</scope>
    <source>
        <tissue>Cervix carcinoma</tissue>
    </source>
</reference>
<reference key="9">
    <citation type="journal article" date="2007" name="Mol. Cell. Proteomics">
        <title>Quantitative phosphoproteome profiling of Wnt3a-mediated signaling network: indicating the involvement of ribonucleoside-diphosphate reductase M2 subunit phosphorylation at residue serine 20 in canonical Wnt signal transduction.</title>
        <authorList>
            <person name="Tang L.-Y."/>
            <person name="Deng N."/>
            <person name="Wang L.-S."/>
            <person name="Dai J."/>
            <person name="Wang Z.-L."/>
            <person name="Jiang X.-S."/>
            <person name="Li S.-J."/>
            <person name="Li L."/>
            <person name="Sheng Q.-H."/>
            <person name="Wu D.-Q."/>
            <person name="Li L."/>
            <person name="Zeng R."/>
        </authorList>
    </citation>
    <scope>PHOSPHORYLATION [LARGE SCALE ANALYSIS] AT SER-90</scope>
    <scope>IDENTIFICATION BY MASS SPECTROMETRY [LARGE SCALE ANALYSIS]</scope>
    <source>
        <tissue>Embryonic kidney</tissue>
    </source>
</reference>
<reference key="10">
    <citation type="journal article" date="2007" name="Science">
        <title>ATM and ATR substrate analysis reveals extensive protein networks responsive to DNA damage.</title>
        <authorList>
            <person name="Matsuoka S."/>
            <person name="Ballif B.A."/>
            <person name="Smogorzewska A."/>
            <person name="McDonald E.R. III"/>
            <person name="Hurov K.E."/>
            <person name="Luo J."/>
            <person name="Bakalarski C.E."/>
            <person name="Zhao Z."/>
            <person name="Solimini N."/>
            <person name="Lerenthal Y."/>
            <person name="Shiloh Y."/>
            <person name="Gygi S.P."/>
            <person name="Elledge S.J."/>
        </authorList>
    </citation>
    <scope>IDENTIFICATION BY MASS SPECTROMETRY [LARGE SCALE ANALYSIS]</scope>
    <source>
        <tissue>Embryonic kidney</tissue>
    </source>
</reference>
<reference key="11">
    <citation type="journal article" date="2008" name="J. Proteome Res.">
        <title>Combining protein-based IMAC, peptide-based IMAC, and MudPIT for efficient phosphoproteomic analysis.</title>
        <authorList>
            <person name="Cantin G.T."/>
            <person name="Yi W."/>
            <person name="Lu B."/>
            <person name="Park S.K."/>
            <person name="Xu T."/>
            <person name="Lee J.-D."/>
            <person name="Yates J.R. III"/>
        </authorList>
    </citation>
    <scope>PHOSPHORYLATION [LARGE SCALE ANALYSIS] AT SER-75 AND SER-90</scope>
    <scope>IDENTIFICATION BY MASS SPECTROMETRY [LARGE SCALE ANALYSIS]</scope>
    <source>
        <tissue>Cervix carcinoma</tissue>
    </source>
</reference>
<reference key="12">
    <citation type="journal article" date="2008" name="Mol. Cell">
        <title>Kinase-selective enrichment enables quantitative phosphoproteomics of the kinome across the cell cycle.</title>
        <authorList>
            <person name="Daub H."/>
            <person name="Olsen J.V."/>
            <person name="Bairlein M."/>
            <person name="Gnad F."/>
            <person name="Oppermann F.S."/>
            <person name="Korner R."/>
            <person name="Greff Z."/>
            <person name="Keri G."/>
            <person name="Stemmann O."/>
            <person name="Mann M."/>
        </authorList>
    </citation>
    <scope>PHOSPHORYLATION [LARGE SCALE ANALYSIS] AT SER-627</scope>
    <scope>IDENTIFICATION BY MASS SPECTROMETRY [LARGE SCALE ANALYSIS]</scope>
    <source>
        <tissue>Cervix carcinoma</tissue>
    </source>
</reference>
<reference key="13">
    <citation type="journal article" date="2008" name="Proc. Natl. Acad. Sci. U.S.A.">
        <title>A quantitative atlas of mitotic phosphorylation.</title>
        <authorList>
            <person name="Dephoure N."/>
            <person name="Zhou C."/>
            <person name="Villen J."/>
            <person name="Beausoleil S.A."/>
            <person name="Bakalarski C.E."/>
            <person name="Elledge S.J."/>
            <person name="Gygi S.P."/>
        </authorList>
    </citation>
    <scope>PHOSPHORYLATION [LARGE SCALE ANALYSIS] AT SER-90; SER-143; SER-165; SER-517; SER-521; THR-526; SER-627; SER-631; THR-649; THR-724; SER-774; SER-824 AND SER-851</scope>
    <scope>IDENTIFICATION BY MASS SPECTROMETRY [LARGE SCALE ANALYSIS]</scope>
    <source>
        <tissue>Cervix carcinoma</tissue>
    </source>
</reference>
<reference key="14">
    <citation type="journal article" date="2009" name="Anal. Chem.">
        <title>Lys-N and trypsin cover complementary parts of the phosphoproteome in a refined SCX-based approach.</title>
        <authorList>
            <person name="Gauci S."/>
            <person name="Helbig A.O."/>
            <person name="Slijper M."/>
            <person name="Krijgsveld J."/>
            <person name="Heck A.J."/>
            <person name="Mohammed S."/>
        </authorList>
    </citation>
    <scope>ACETYLATION [LARGE SCALE ANALYSIS] AT ALA-2</scope>
    <scope>CLEAVAGE OF INITIATOR METHIONINE [LARGE SCALE ANALYSIS]</scope>
    <scope>IDENTIFICATION BY MASS SPECTROMETRY [LARGE SCALE ANALYSIS]</scope>
</reference>
<reference key="15">
    <citation type="journal article" date="2009" name="Mol. Cell. Proteomics">
        <title>Large-scale proteomics analysis of the human kinome.</title>
        <authorList>
            <person name="Oppermann F.S."/>
            <person name="Gnad F."/>
            <person name="Olsen J.V."/>
            <person name="Hornberger R."/>
            <person name="Greff Z."/>
            <person name="Keri G."/>
            <person name="Mann M."/>
            <person name="Daub H."/>
        </authorList>
    </citation>
    <scope>PHOSPHORYLATION [LARGE SCALE ANALYSIS] AT SER-90; THR-526 AND SER-774</scope>
    <scope>IDENTIFICATION BY MASS SPECTROMETRY [LARGE SCALE ANALYSIS]</scope>
</reference>
<reference key="16">
    <citation type="journal article" date="2009" name="Sci. Signal.">
        <title>Quantitative phosphoproteomic analysis of T cell receptor signaling reveals system-wide modulation of protein-protein interactions.</title>
        <authorList>
            <person name="Mayya V."/>
            <person name="Lundgren D.H."/>
            <person name="Hwang S.-I."/>
            <person name="Rezaul K."/>
            <person name="Wu L."/>
            <person name="Eng J.K."/>
            <person name="Rodionov V."/>
            <person name="Han D.K."/>
        </authorList>
    </citation>
    <scope>PHOSPHORYLATION [LARGE SCALE ANALYSIS] AT SER-75; SER-90; SER-627; SER-631; THR-724 AND SER-824</scope>
    <scope>IDENTIFICATION BY MASS SPECTROMETRY [LARGE SCALE ANALYSIS]</scope>
    <source>
        <tissue>Leukemic T-cell</tissue>
    </source>
</reference>
<reference key="17">
    <citation type="journal article" date="2009" name="Science">
        <title>Lysine acetylation targets protein complexes and co-regulates major cellular functions.</title>
        <authorList>
            <person name="Choudhary C."/>
            <person name="Kumar C."/>
            <person name="Gnad F."/>
            <person name="Nielsen M.L."/>
            <person name="Rehman M."/>
            <person name="Walther T.C."/>
            <person name="Olsen J.V."/>
            <person name="Mann M."/>
        </authorList>
    </citation>
    <scope>ACETYLATION [LARGE SCALE ANALYSIS] AT LYS-892 AND LYS-1017</scope>
    <scope>IDENTIFICATION BY MASS SPECTROMETRY [LARGE SCALE ANALYSIS]</scope>
</reference>
<reference key="18">
    <citation type="journal article" date="2010" name="Nucleic Acids Res.">
        <title>The RNA binding protein Larp1 regulates cell division, apoptosis and cell migration.</title>
        <authorList>
            <person name="Burrows C."/>
            <person name="Abd Latip N."/>
            <person name="Lam S.J."/>
            <person name="Carpenter L."/>
            <person name="Sawicka K."/>
            <person name="Tzolovsky G."/>
            <person name="Gabra H."/>
            <person name="Bushell M."/>
            <person name="Glover D.M."/>
            <person name="Willis A.E."/>
            <person name="Blagden S.P."/>
        </authorList>
    </citation>
    <scope>RNA-BINDING</scope>
    <scope>FUNCTION</scope>
    <scope>SUBCELLULAR LOCATION</scope>
    <scope>IDENTIFICATION IN A COMPLEX WITH MRNA; PABPC1; EIF4E AND EIF4G1</scope>
</reference>
<reference key="19">
    <citation type="journal article" date="2010" name="Sci. Signal.">
        <title>Quantitative phosphoproteomics reveals widespread full phosphorylation site occupancy during mitosis.</title>
        <authorList>
            <person name="Olsen J.V."/>
            <person name="Vermeulen M."/>
            <person name="Santamaria A."/>
            <person name="Kumar C."/>
            <person name="Miller M.L."/>
            <person name="Jensen L.J."/>
            <person name="Gnad F."/>
            <person name="Cox J."/>
            <person name="Jensen T.S."/>
            <person name="Nigg E.A."/>
            <person name="Brunak S."/>
            <person name="Mann M."/>
        </authorList>
    </citation>
    <scope>PHOSPHORYLATION [LARGE SCALE ANALYSIS] AT SER-143; SER-220; THR-376; SER-521; THR-526; SER-548; SER-627; SER-631; THR-649; SER-766 AND SER-774</scope>
    <scope>IDENTIFICATION BY MASS SPECTROMETRY [LARGE SCALE ANALYSIS]</scope>
    <source>
        <tissue>Cervix carcinoma</tissue>
    </source>
</reference>
<reference key="20">
    <citation type="journal article" date="2011" name="BMC Syst. Biol.">
        <title>Initial characterization of the human central proteome.</title>
        <authorList>
            <person name="Burkard T.R."/>
            <person name="Planyavsky M."/>
            <person name="Kaupe I."/>
            <person name="Breitwieser F.P."/>
            <person name="Buerckstuemmer T."/>
            <person name="Bennett K.L."/>
            <person name="Superti-Furga G."/>
            <person name="Colinge J."/>
        </authorList>
    </citation>
    <scope>IDENTIFICATION BY MASS SPECTROMETRY [LARGE SCALE ANALYSIS]</scope>
</reference>
<reference key="21">
    <citation type="journal article" date="2011" name="Sci. Signal.">
        <title>System-wide temporal characterization of the proteome and phosphoproteome of human embryonic stem cell differentiation.</title>
        <authorList>
            <person name="Rigbolt K.T."/>
            <person name="Prokhorova T.A."/>
            <person name="Akimov V."/>
            <person name="Henningsen J."/>
            <person name="Johansen P.T."/>
            <person name="Kratchmarova I."/>
            <person name="Kassem M."/>
            <person name="Mann M."/>
            <person name="Olsen J.V."/>
            <person name="Blagoev B."/>
        </authorList>
    </citation>
    <scope>PHOSPHORYLATION [LARGE SCALE ANALYSIS] AT SER-90; SER-143; SER-215; SER-220; SER-521; THR-526; SER-548; SER-627; SER-631; SER-766; SER-774 AND TYR-777</scope>
    <scope>IDENTIFICATION BY MASS SPECTROMETRY [LARGE SCALE ANALYSIS]</scope>
</reference>
<reference key="22">
    <citation type="journal article" date="2012" name="Mol. Cell. Proteomics">
        <title>Comparative large-scale characterisation of plant vs. mammal proteins reveals similar and idiosyncratic N-alpha acetylation features.</title>
        <authorList>
            <person name="Bienvenut W.V."/>
            <person name="Sumpton D."/>
            <person name="Martinez A."/>
            <person name="Lilla S."/>
            <person name="Espagne C."/>
            <person name="Meinnel T."/>
            <person name="Giglione C."/>
        </authorList>
    </citation>
    <scope>ACETYLATION [LARGE SCALE ANALYSIS] AT ALA-2</scope>
    <scope>CLEAVAGE OF INITIATOR METHIONINE [LARGE SCALE ANALYSIS]</scope>
    <scope>IDENTIFICATION BY MASS SPECTROMETRY [LARGE SCALE ANALYSIS]</scope>
</reference>
<reference key="23">
    <citation type="journal article" date="2012" name="Proc. Natl. Acad. Sci. U.S.A.">
        <title>N-terminal acetylome analyses and functional insights of the N-terminal acetyltransferase NatB.</title>
        <authorList>
            <person name="Van Damme P."/>
            <person name="Lasa M."/>
            <person name="Polevoda B."/>
            <person name="Gazquez C."/>
            <person name="Elosegui-Artola A."/>
            <person name="Kim D.S."/>
            <person name="De Juan-Pardo E."/>
            <person name="Demeyer K."/>
            <person name="Hole K."/>
            <person name="Larrea E."/>
            <person name="Timmerman E."/>
            <person name="Prieto J."/>
            <person name="Arnesen T."/>
            <person name="Sherman F."/>
            <person name="Gevaert K."/>
            <person name="Aldabe R."/>
        </authorList>
    </citation>
    <scope>ACETYLATION [LARGE SCALE ANALYSIS] AT ALA-2</scope>
    <scope>CLEAVAGE OF INITIATOR METHIONINE [LARGE SCALE ANALYSIS]</scope>
    <scope>IDENTIFICATION BY MASS SPECTROMETRY [LARGE SCALE ANALYSIS]</scope>
</reference>
<reference key="24">
    <citation type="journal article" date="2013" name="FEBS Lett.">
        <title>LARP1 specifically recognizes the 3' terminus of poly(A) mRNA.</title>
        <authorList>
            <person name="Aoki K."/>
            <person name="Adachi S."/>
            <person name="Homoto M."/>
            <person name="Kusano H."/>
            <person name="Koike K."/>
            <person name="Natsume T."/>
        </authorList>
    </citation>
    <scope>RNA-BINDING</scope>
    <scope>FUNCTION</scope>
    <scope>INTERACTION WITH PABPC1</scope>
</reference>
<reference key="25">
    <citation type="journal article" date="2013" name="J. Proteome Res.">
        <title>Toward a comprehensive characterization of a human cancer cell phosphoproteome.</title>
        <authorList>
            <person name="Zhou H."/>
            <person name="Di Palma S."/>
            <person name="Preisinger C."/>
            <person name="Peng M."/>
            <person name="Polat A.N."/>
            <person name="Heck A.J."/>
            <person name="Mohammed S."/>
        </authorList>
    </citation>
    <scope>PHOSPHORYLATION [LARGE SCALE ANALYSIS] AT SER-90; SER-143; THR-376; SER-517; SER-521; THR-526; SER-548; SER-591; SER-627; THR-649; SER-766; SER-774; THR-785; THR-788; SER-824 AND SER-1089</scope>
    <scope>IDENTIFICATION BY MASS SPECTROMETRY [LARGE SCALE ANALYSIS]</scope>
    <source>
        <tissue>Cervix carcinoma</tissue>
        <tissue>Erythroleukemia</tissue>
    </source>
</reference>
<reference key="26">
    <citation type="journal article" date="2013" name="J. Transl. Med.">
        <title>LARP1 predict the prognosis for early-stage and AFP-normal hepatocellular carcinoma.</title>
        <authorList>
            <person name="Xie C."/>
            <person name="Huang L."/>
            <person name="Xie S."/>
            <person name="Xie D."/>
            <person name="Zhang G."/>
            <person name="Wang P."/>
            <person name="Peng L."/>
            <person name="Gao Z."/>
        </authorList>
    </citation>
    <scope>INDUCTION</scope>
</reference>
<reference key="27">
    <citation type="journal article" date="2014" name="Genes Dev.">
        <title>Proteomic analysis of cap-dependent translation identifies LARP1 as a key regulator of 5'TOP mRNA translation.</title>
        <authorList>
            <person name="Tcherkezian J."/>
            <person name="Cargnello M."/>
            <person name="Romeo Y."/>
            <person name="Huttlin E.L."/>
            <person name="Lavoie G."/>
            <person name="Gygi S.P."/>
            <person name="Roux P.P."/>
        </authorList>
    </citation>
    <scope>FUNCTION</scope>
    <scope>RNA-BINDING</scope>
    <scope>INTERACTION WITH RPTOR; EIF4A1 AND PABPC1</scope>
    <scope>SUBCELLULAR LOCATION</scope>
    <scope>DOMAIN</scope>
</reference>
<reference key="28">
    <citation type="journal article" date="2014" name="J. Proteomics">
        <title>An enzyme assisted RP-RPLC approach for in-depth analysis of human liver phosphoproteome.</title>
        <authorList>
            <person name="Bian Y."/>
            <person name="Song C."/>
            <person name="Cheng K."/>
            <person name="Dong M."/>
            <person name="Wang F."/>
            <person name="Huang J."/>
            <person name="Sun D."/>
            <person name="Wang L."/>
            <person name="Ye M."/>
            <person name="Zou H."/>
        </authorList>
    </citation>
    <scope>PHOSPHORYLATION [LARGE SCALE ANALYSIS] AT SER-75; SER-90; SER-627; SER-631; THR-649; SER-766 AND SER-1040</scope>
    <scope>IDENTIFICATION BY MASS SPECTROMETRY [LARGE SCALE ANALYSIS]</scope>
    <source>
        <tissue>Liver</tissue>
    </source>
</reference>
<reference key="29">
    <citation type="journal article" date="2014" name="Nat. Struct. Mol. Biol.">
        <title>Uncovering global SUMOylation signaling networks in a site-specific manner.</title>
        <authorList>
            <person name="Hendriks I.A."/>
            <person name="D'Souza R.C."/>
            <person name="Yang B."/>
            <person name="Verlaan-de Vries M."/>
            <person name="Mann M."/>
            <person name="Vertegaal A.C."/>
        </authorList>
    </citation>
    <scope>SUMOYLATION [LARGE SCALE ANALYSIS] AT LYS-311</scope>
    <scope>IDENTIFICATION BY MASS SPECTROMETRY [LARGE SCALE ANALYSIS]</scope>
</reference>
<reference key="30">
    <citation type="journal article" date="2016" name="PLoS Pathog.">
        <title>Characterization of RyDEN (C19orf66) as an interferon-stimulated cellular inhibitor against dengue virus replication.</title>
        <authorList>
            <person name="Suzuki Y."/>
            <person name="Chin W.X."/>
            <person name="Han Q."/>
            <person name="Ichiyama K."/>
            <person name="Lee C.H."/>
            <person name="Eyo Z.W."/>
            <person name="Ebina H."/>
            <person name="Takahashi H."/>
            <person name="Takahashi C."/>
            <person name="Tan B.H."/>
            <person name="Hishiki T."/>
            <person name="Ohba K."/>
            <person name="Matsuyama T."/>
            <person name="Koyanagi Y."/>
            <person name="Tan Y.J."/>
            <person name="Sawasaki T."/>
            <person name="Chu J.J."/>
            <person name="Vasudevan S.G."/>
            <person name="Sano K."/>
            <person name="Yamamoto N."/>
        </authorList>
    </citation>
    <scope>IDENTIFICATION BY MASS SPECTROMETRY</scope>
    <scope>FUNCTION (MICROBIAL INFECTION)</scope>
    <scope>IDENTIFICATION IN A COMPLEX WITH PABPC1 AND SHFL</scope>
</reference>
<reference key="31">
    <citation type="journal article" date="2015" name="J. Biol. Chem.">
        <title>La-related protein 1 (LARP1) represses terminal oligopyrimidine (TOP) mRNA translation downstream of mTOR complex 1 (mTORC1).</title>
        <authorList>
            <person name="Fonseca B.D."/>
            <person name="Zakaria C."/>
            <person name="Jia J.J."/>
            <person name="Graber T.E."/>
            <person name="Svitkin Y."/>
            <person name="Tahmasebi S."/>
            <person name="Healy D."/>
            <person name="Hoang H.D."/>
            <person name="Jensen J.M."/>
            <person name="Diao I.T."/>
            <person name="Lussier A."/>
            <person name="Dajadian C."/>
            <person name="Padmanabhan N."/>
            <person name="Wang W."/>
            <person name="Matta-Camacho E."/>
            <person name="Hearnden J."/>
            <person name="Smith E.M."/>
            <person name="Tsukumo Y."/>
            <person name="Yanagiya A."/>
            <person name="Morita M."/>
            <person name="Petroulakis E."/>
            <person name="Gonzalez J.L."/>
            <person name="Hernandez G."/>
            <person name="Alain T."/>
            <person name="Damgaard C.K."/>
        </authorList>
    </citation>
    <scope>FUNCTION</scope>
    <scope>INTERACTION WITH PABPC1; RPTOR AND THE MTORC1 COMPLEX</scope>
    <scope>IDENTIFICATION BY MASS SPECTROMETRY</scope>
    <scope>SUBCELLULAR LOCATION</scope>
    <scope>MUTAGENESIS OF 497-SER--PRO-507; PHE-505; 966-PHE--ILE-970 AND PHE-966</scope>
</reference>
<reference key="32">
    <citation type="journal article" date="2017" name="Elife">
        <title>LARP1 functions as a molecular switch for mTORC1-mediated translation of an essential class of mRNAs.</title>
        <authorList>
            <person name="Hong S."/>
            <person name="Freeberg M.A."/>
            <person name="Han T."/>
            <person name="Kamath A."/>
            <person name="Yao Y."/>
            <person name="Fukuda T."/>
            <person name="Suzuki T."/>
            <person name="Kim J.K."/>
            <person name="Inoki K."/>
        </authorList>
    </citation>
    <scope>FUNCTION</scope>
    <scope>INTERACTION WITH RPTOR; PABPC1; EIF4E AND EIF4G1</scope>
    <scope>SUBCELLULAR LOCATION</scope>
    <scope>PHOSPHORYLATION AT SER-766; THR-769; THR-770; THR-782; THR-785; THR-797; SER-824; SER-847; SER-851; SER-861; THR-865; SER-868 AND SER-1058</scope>
    <scope>IDENTIFICATION BY MASS SPECTROMETRY</scope>
    <scope>MUTAGENESIS OF SER-766; THR-769; SER-847 AND SER-1058</scope>
</reference>
<reference key="33">
    <citation type="journal article" date="2017" name="Mol. Cell">
        <title>Autogenous Control of 5'TOP mRNA Stability by 40S Ribosomes.</title>
        <authorList>
            <person name="Gentilella A."/>
            <person name="Moron-Duran F.D."/>
            <person name="Fuentes P."/>
            <person name="Zweig-Rocha G."/>
            <person name="Riano-Canalias F."/>
            <person name="Pelletier J."/>
            <person name="Ruiz M."/>
            <person name="Turon G."/>
            <person name="Castano J."/>
            <person name="Tauler A."/>
            <person name="Bueno C."/>
            <person name="Menendez P."/>
            <person name="Kozma S.C."/>
            <person name="Thomas G."/>
        </authorList>
    </citation>
    <scope>FUNCTION</scope>
</reference>
<reference key="34">
    <citation type="journal article" date="2017" name="Nat. Struct. Mol. Biol.">
        <title>Site-specific mapping of the human SUMO proteome reveals co-modification with phosphorylation.</title>
        <authorList>
            <person name="Hendriks I.A."/>
            <person name="Lyon D."/>
            <person name="Young C."/>
            <person name="Jensen L.J."/>
            <person name="Vertegaal A.C."/>
            <person name="Nielsen M.L."/>
        </authorList>
    </citation>
    <scope>SUMOYLATION [LARGE SCALE ANALYSIS] AT LYS-260; LYS-311; LYS-531 AND LYS-703</scope>
    <scope>IDENTIFICATION BY MASS SPECTROMETRY [LARGE SCALE ANALYSIS]</scope>
</reference>
<reference key="35">
    <citation type="journal article" date="2018" name="Nucleic Acids Res.">
        <title>La-related protein 1 (LARP1) repression of TOP mRNA translation is mediated through its cap-binding domain and controlled by an adjacent regulatory region.</title>
        <authorList>
            <person name="Philippe L."/>
            <person name="Vasseur J.J."/>
            <person name="Debart F."/>
            <person name="Thoreen C.C."/>
        </authorList>
    </citation>
    <scope>FUNCTION</scope>
    <scope>INTERACTION WITH PABPC1 AND RPTOR</scope>
    <scope>DOMAIN</scope>
    <scope>MUTAGENESIS OF TYR-960</scope>
</reference>
<reference evidence="18 19" key="36">
    <citation type="journal article" date="2015" name="Nucleic Acids Res.">
        <title>The La-related protein 1-specific domain repurposes HEAT-like repeats to directly bind a 5'TOP sequence.</title>
        <authorList>
            <person name="Lahr R.M."/>
            <person name="Mack S.M."/>
            <person name="Heroux A."/>
            <person name="Blagden S.P."/>
            <person name="Bousquet-Antonelli C."/>
            <person name="Deragon J.M."/>
            <person name="Berman A.J."/>
        </authorList>
    </citation>
    <scope>X-RAY CRYSTALLOGRAPHY (1.86 ANGSTROMS) OF 873-1023</scope>
    <scope>FUNCTION</scope>
    <scope>DOMAIN</scope>
    <scope>RNA-BINDING</scope>
    <scope>MUTAGENESIS OF ARG-917 AND TYR-960</scope>
</reference>
<reference evidence="20 21 22" key="37">
    <citation type="journal article" date="2017" name="Elife">
        <title>La-related protein 1 (LARP1) binds the mRNA cap, blocking eIF4F assembly on TOP mRNAs.</title>
        <authorList>
            <person name="Lahr R.M."/>
            <person name="Fonseca B.D."/>
            <person name="Ciotti G.E."/>
            <person name="Al-Ashtal H.A."/>
            <person name="Jia J.J."/>
            <person name="Niklaus M.R."/>
            <person name="Blagden S.P."/>
            <person name="Alain T."/>
            <person name="Berman A.J."/>
        </authorList>
    </citation>
    <scope>X-RAY CRYSTALLOGRAPHY (1.69 ANGSTROMS) OF 873-1023 IN COMPLEX WITH RNA 7-METHYLGUANOSINE CAP</scope>
    <scope>FUNCTION</scope>
    <scope>DOMAIN</scope>
    <scope>MUTAGENESIS OF ARG-917; TYR-960; GLU-963 AND TYR-999</scope>
</reference>
<accession>Q6PKG0</accession>
<accession>O94836</accession>
<accession>Q8N4M2</accession>
<accession>Q8NB73</accession>
<accession>Q9UFD7</accession>